<gene>
    <name evidence="7" type="primary">OPN1MW2</name>
</gene>
<sequence>MAQQWSLQRLAGRHPQDSYEDSTQSSIFTYTNSNSTRGPFEGPNYHIAPRWVYHLTSVWMIFVVIASVFTNGLVLAATMKFKKLRHPLNWILVNLAVADLAETVIASTISVVNQVYGYFVLGHPMCVLEGYTVSLCGITGLWSLAIISWERWMVVCKPFGNVRFDAKLAIVGIAFSWIWAAVWTAPPIFGWSRYWPHGLKTSCGPDVFSGSSYPGVQSYMIVLMVTCCITPLSIIVLCYLQVWLAIRAVAKQQKESESTQKAEKEVTRMVVVMVLAFCFCWGPYAFFACFAAANPGYPFHPLMAALPAFFAKSATIYNPVIYVFMNRQFRNCILQLFGKKVDDGSELSSASKTEVSSVSSVSPA</sequence>
<accession>P0DN77</accession>
<protein>
    <recommendedName>
        <fullName evidence="6">Medium-wave-sensitive opsin 2</fullName>
    </recommendedName>
    <alternativeName>
        <fullName evidence="1">Green cone photoreceptor pigment</fullName>
    </alternativeName>
    <alternativeName>
        <fullName evidence="1">Green-sensitive opsin</fullName>
        <shortName evidence="1">GOP</shortName>
    </alternativeName>
    <alternativeName>
        <fullName evidence="7">Opsin 1 cone pigments medium-wave-sensitive 2</fullName>
    </alternativeName>
</protein>
<reference key="1">
    <citation type="journal article" date="2005" name="Nature">
        <title>The DNA sequence of the human X chromosome.</title>
        <authorList>
            <person name="Ross M.T."/>
            <person name="Grafham D.V."/>
            <person name="Coffey A.J."/>
            <person name="Scherer S."/>
            <person name="McLay K."/>
            <person name="Muzny D."/>
            <person name="Platzer M."/>
            <person name="Howell G.R."/>
            <person name="Burrows C."/>
            <person name="Bird C.P."/>
            <person name="Frankish A."/>
            <person name="Lovell F.L."/>
            <person name="Howe K.L."/>
            <person name="Ashurst J.L."/>
            <person name="Fulton R.S."/>
            <person name="Sudbrak R."/>
            <person name="Wen G."/>
            <person name="Jones M.C."/>
            <person name="Hurles M.E."/>
            <person name="Andrews T.D."/>
            <person name="Scott C.E."/>
            <person name="Searle S."/>
            <person name="Ramser J."/>
            <person name="Whittaker A."/>
            <person name="Deadman R."/>
            <person name="Carter N.P."/>
            <person name="Hunt S.E."/>
            <person name="Chen R."/>
            <person name="Cree A."/>
            <person name="Gunaratne P."/>
            <person name="Havlak P."/>
            <person name="Hodgson A."/>
            <person name="Metzker M.L."/>
            <person name="Richards S."/>
            <person name="Scott G."/>
            <person name="Steffen D."/>
            <person name="Sodergren E."/>
            <person name="Wheeler D.A."/>
            <person name="Worley K.C."/>
            <person name="Ainscough R."/>
            <person name="Ambrose K.D."/>
            <person name="Ansari-Lari M.A."/>
            <person name="Aradhya S."/>
            <person name="Ashwell R.I."/>
            <person name="Babbage A.K."/>
            <person name="Bagguley C.L."/>
            <person name="Ballabio A."/>
            <person name="Banerjee R."/>
            <person name="Barker G.E."/>
            <person name="Barlow K.F."/>
            <person name="Barrett I.P."/>
            <person name="Bates K.N."/>
            <person name="Beare D.M."/>
            <person name="Beasley H."/>
            <person name="Beasley O."/>
            <person name="Beck A."/>
            <person name="Bethel G."/>
            <person name="Blechschmidt K."/>
            <person name="Brady N."/>
            <person name="Bray-Allen S."/>
            <person name="Bridgeman A.M."/>
            <person name="Brown A.J."/>
            <person name="Brown M.J."/>
            <person name="Bonnin D."/>
            <person name="Bruford E.A."/>
            <person name="Buhay C."/>
            <person name="Burch P."/>
            <person name="Burford D."/>
            <person name="Burgess J."/>
            <person name="Burrill W."/>
            <person name="Burton J."/>
            <person name="Bye J.M."/>
            <person name="Carder C."/>
            <person name="Carrel L."/>
            <person name="Chako J."/>
            <person name="Chapman J.C."/>
            <person name="Chavez D."/>
            <person name="Chen E."/>
            <person name="Chen G."/>
            <person name="Chen Y."/>
            <person name="Chen Z."/>
            <person name="Chinault C."/>
            <person name="Ciccodicola A."/>
            <person name="Clark S.Y."/>
            <person name="Clarke G."/>
            <person name="Clee C.M."/>
            <person name="Clegg S."/>
            <person name="Clerc-Blankenburg K."/>
            <person name="Clifford K."/>
            <person name="Cobley V."/>
            <person name="Cole C.G."/>
            <person name="Conquer J.S."/>
            <person name="Corby N."/>
            <person name="Connor R.E."/>
            <person name="David R."/>
            <person name="Davies J."/>
            <person name="Davis C."/>
            <person name="Davis J."/>
            <person name="Delgado O."/>
            <person name="Deshazo D."/>
            <person name="Dhami P."/>
            <person name="Ding Y."/>
            <person name="Dinh H."/>
            <person name="Dodsworth S."/>
            <person name="Draper H."/>
            <person name="Dugan-Rocha S."/>
            <person name="Dunham A."/>
            <person name="Dunn M."/>
            <person name="Durbin K.J."/>
            <person name="Dutta I."/>
            <person name="Eades T."/>
            <person name="Ellwood M."/>
            <person name="Emery-Cohen A."/>
            <person name="Errington H."/>
            <person name="Evans K.L."/>
            <person name="Faulkner L."/>
            <person name="Francis F."/>
            <person name="Frankland J."/>
            <person name="Fraser A.E."/>
            <person name="Galgoczy P."/>
            <person name="Gilbert J."/>
            <person name="Gill R."/>
            <person name="Gloeckner G."/>
            <person name="Gregory S.G."/>
            <person name="Gribble S."/>
            <person name="Griffiths C."/>
            <person name="Grocock R."/>
            <person name="Gu Y."/>
            <person name="Gwilliam R."/>
            <person name="Hamilton C."/>
            <person name="Hart E.A."/>
            <person name="Hawes A."/>
            <person name="Heath P.D."/>
            <person name="Heitmann K."/>
            <person name="Hennig S."/>
            <person name="Hernandez J."/>
            <person name="Hinzmann B."/>
            <person name="Ho S."/>
            <person name="Hoffs M."/>
            <person name="Howden P.J."/>
            <person name="Huckle E.J."/>
            <person name="Hume J."/>
            <person name="Hunt P.J."/>
            <person name="Hunt A.R."/>
            <person name="Isherwood J."/>
            <person name="Jacob L."/>
            <person name="Johnson D."/>
            <person name="Jones S."/>
            <person name="de Jong P.J."/>
            <person name="Joseph S.S."/>
            <person name="Keenan S."/>
            <person name="Kelly S."/>
            <person name="Kershaw J.K."/>
            <person name="Khan Z."/>
            <person name="Kioschis P."/>
            <person name="Klages S."/>
            <person name="Knights A.J."/>
            <person name="Kosiura A."/>
            <person name="Kovar-Smith C."/>
            <person name="Laird G.K."/>
            <person name="Langford C."/>
            <person name="Lawlor S."/>
            <person name="Leversha M."/>
            <person name="Lewis L."/>
            <person name="Liu W."/>
            <person name="Lloyd C."/>
            <person name="Lloyd D.M."/>
            <person name="Loulseged H."/>
            <person name="Loveland J.E."/>
            <person name="Lovell J.D."/>
            <person name="Lozado R."/>
            <person name="Lu J."/>
            <person name="Lyne R."/>
            <person name="Ma J."/>
            <person name="Maheshwari M."/>
            <person name="Matthews L.H."/>
            <person name="McDowall J."/>
            <person name="McLaren S."/>
            <person name="McMurray A."/>
            <person name="Meidl P."/>
            <person name="Meitinger T."/>
            <person name="Milne S."/>
            <person name="Miner G."/>
            <person name="Mistry S.L."/>
            <person name="Morgan M."/>
            <person name="Morris S."/>
            <person name="Mueller I."/>
            <person name="Mullikin J.C."/>
            <person name="Nguyen N."/>
            <person name="Nordsiek G."/>
            <person name="Nyakatura G."/>
            <person name="O'dell C.N."/>
            <person name="Okwuonu G."/>
            <person name="Palmer S."/>
            <person name="Pandian R."/>
            <person name="Parker D."/>
            <person name="Parrish J."/>
            <person name="Pasternak S."/>
            <person name="Patel D."/>
            <person name="Pearce A.V."/>
            <person name="Pearson D.M."/>
            <person name="Pelan S.E."/>
            <person name="Perez L."/>
            <person name="Porter K.M."/>
            <person name="Ramsey Y."/>
            <person name="Reichwald K."/>
            <person name="Rhodes S."/>
            <person name="Ridler K.A."/>
            <person name="Schlessinger D."/>
            <person name="Schueler M.G."/>
            <person name="Sehra H.K."/>
            <person name="Shaw-Smith C."/>
            <person name="Shen H."/>
            <person name="Sheridan E.M."/>
            <person name="Shownkeen R."/>
            <person name="Skuce C.D."/>
            <person name="Smith M.L."/>
            <person name="Sotheran E.C."/>
            <person name="Steingruber H.E."/>
            <person name="Steward C.A."/>
            <person name="Storey R."/>
            <person name="Swann R.M."/>
            <person name="Swarbreck D."/>
            <person name="Tabor P.E."/>
            <person name="Taudien S."/>
            <person name="Taylor T."/>
            <person name="Teague B."/>
            <person name="Thomas K."/>
            <person name="Thorpe A."/>
            <person name="Timms K."/>
            <person name="Tracey A."/>
            <person name="Trevanion S."/>
            <person name="Tromans A.C."/>
            <person name="d'Urso M."/>
            <person name="Verduzco D."/>
            <person name="Villasana D."/>
            <person name="Waldron L."/>
            <person name="Wall M."/>
            <person name="Wang Q."/>
            <person name="Warren J."/>
            <person name="Warry G.L."/>
            <person name="Wei X."/>
            <person name="West A."/>
            <person name="Whitehead S.L."/>
            <person name="Whiteley M.N."/>
            <person name="Wilkinson J.E."/>
            <person name="Willey D.L."/>
            <person name="Williams G."/>
            <person name="Williams L."/>
            <person name="Williamson A."/>
            <person name="Williamson H."/>
            <person name="Wilming L."/>
            <person name="Woodmansey R.L."/>
            <person name="Wray P.W."/>
            <person name="Yen J."/>
            <person name="Zhang J."/>
            <person name="Zhou J."/>
            <person name="Zoghbi H."/>
            <person name="Zorilla S."/>
            <person name="Buck D."/>
            <person name="Reinhardt R."/>
            <person name="Poustka A."/>
            <person name="Rosenthal A."/>
            <person name="Lehrach H."/>
            <person name="Meindl A."/>
            <person name="Minx P.J."/>
            <person name="Hillier L.W."/>
            <person name="Willard H.F."/>
            <person name="Wilson R.K."/>
            <person name="Waterston R.H."/>
            <person name="Rice C.M."/>
            <person name="Vaudin M."/>
            <person name="Coulson A."/>
            <person name="Nelson D.L."/>
            <person name="Weinstock G."/>
            <person name="Sulston J.E."/>
            <person name="Durbin R.M."/>
            <person name="Hubbard T."/>
            <person name="Gibbs R.A."/>
            <person name="Beck S."/>
            <person name="Rogers J."/>
            <person name="Bentley D.R."/>
        </authorList>
    </citation>
    <scope>NUCLEOTIDE SEQUENCE [LARGE SCALE GENOMIC DNA]</scope>
</reference>
<evidence type="ECO:0000250" key="1">
    <source>
        <dbReference type="UniProtKB" id="P04001"/>
    </source>
</evidence>
<evidence type="ECO:0000255" key="2"/>
<evidence type="ECO:0000255" key="3">
    <source>
        <dbReference type="PROSITE-ProRule" id="PRU00498"/>
    </source>
</evidence>
<evidence type="ECO:0000255" key="4">
    <source>
        <dbReference type="PROSITE-ProRule" id="PRU00521"/>
    </source>
</evidence>
<evidence type="ECO:0000256" key="5">
    <source>
        <dbReference type="SAM" id="MobiDB-lite"/>
    </source>
</evidence>
<evidence type="ECO:0000305" key="6"/>
<evidence type="ECO:0000312" key="7">
    <source>
        <dbReference type="HGNC" id="HGNC:26952"/>
    </source>
</evidence>
<proteinExistence type="inferred from homology"/>
<comment type="function">
    <text evidence="1">Visual pigments are the light-absorbing molecules that mediate vision. They consist of an apoprotein, opsin, covalently linked to cis-retinal.</text>
</comment>
<comment type="subcellular location">
    <subcellularLocation>
        <location evidence="1">Cell membrane</location>
        <topology evidence="2">Multi-pass membrane protein</topology>
    </subcellularLocation>
</comment>
<comment type="PTM">
    <text evidence="1">N-glycosylated. O-glycosylated.</text>
</comment>
<comment type="PTM">
    <text evidence="1">Phosphorylated on some or all of the serine and threonine residues present in the C-terminal region.</text>
</comment>
<comment type="similarity">
    <text evidence="4">Belongs to the G-protein coupled receptor 1 family. Opsin subfamily.</text>
</comment>
<comment type="caution">
    <text evidence="6">Medium-wave-sensitive opsin genes vary in number among individuals and, together with a single red pigment gene, reside in a head-to-tail tandem array within the X chromosome. In the GRCh38 reference genome assembly, there are 3 genes in tandem coding for identical proteins AC P04001, AC P0DN77 and P0DN78.</text>
</comment>
<keyword id="KW-1003">Cell membrane</keyword>
<keyword id="KW-0157">Chromophore</keyword>
<keyword id="KW-1015">Disulfide bond</keyword>
<keyword id="KW-0297">G-protein coupled receptor</keyword>
<keyword id="KW-0325">Glycoprotein</keyword>
<keyword id="KW-0472">Membrane</keyword>
<keyword id="KW-0597">Phosphoprotein</keyword>
<keyword id="KW-0600">Photoreceptor protein</keyword>
<keyword id="KW-0675">Receptor</keyword>
<keyword id="KW-1185">Reference proteome</keyword>
<keyword id="KW-0681">Retinal protein</keyword>
<keyword id="KW-0716">Sensory transduction</keyword>
<keyword id="KW-0807">Transducer</keyword>
<keyword id="KW-0812">Transmembrane</keyword>
<keyword id="KW-1133">Transmembrane helix</keyword>
<keyword id="KW-0844">Vision</keyword>
<name>OPSG2_HUMAN</name>
<dbReference type="EMBL" id="AC244097">
    <property type="status" value="NOT_ANNOTATED_CDS"/>
    <property type="molecule type" value="Genomic_DNA"/>
</dbReference>
<dbReference type="RefSeq" id="NP_001041646.1">
    <property type="nucleotide sequence ID" value="NM_001048181.3"/>
</dbReference>
<dbReference type="RefSeq" id="NP_001316996.1">
    <property type="nucleotide sequence ID" value="NM_001330067.1"/>
</dbReference>
<dbReference type="RefSeq" id="XP_016855469.1">
    <property type="nucleotide sequence ID" value="XM_016999980.1"/>
</dbReference>
<dbReference type="SMR" id="P0DN77"/>
<dbReference type="FunCoup" id="P0DN77">
    <property type="interactions" value="178"/>
</dbReference>
<dbReference type="STRING" id="9606.ENSP00000358945"/>
<dbReference type="GlyCosmos" id="P0DN77">
    <property type="glycosylation" value="1 site, No reported glycans"/>
</dbReference>
<dbReference type="GlyGen" id="P0DN77">
    <property type="glycosylation" value="1 site"/>
</dbReference>
<dbReference type="BioMuta" id="OPN1MW2"/>
<dbReference type="MassIVE" id="P0DN77"/>
<dbReference type="PaxDb" id="9606-ENSP00000358945"/>
<dbReference type="Antibodypedia" id="65172">
    <property type="antibodies" value="18 antibodies from 5 providers"/>
</dbReference>
<dbReference type="DNASU" id="2652"/>
<dbReference type="Ensembl" id="ENST00000369929.8">
    <property type="protein sequence ID" value="ENSP00000358945.4"/>
    <property type="gene ID" value="ENSG00000166160.9"/>
</dbReference>
<dbReference type="GeneID" id="101060233"/>
<dbReference type="GeneID" id="728458"/>
<dbReference type="KEGG" id="hsa:101060233"/>
<dbReference type="KEGG" id="hsa:2652"/>
<dbReference type="KEGG" id="hsa:728458"/>
<dbReference type="MANE-Select" id="ENST00000369929.8">
    <property type="protein sequence ID" value="ENSP00000358945.4"/>
    <property type="RefSeq nucleotide sequence ID" value="NM_001048181.3"/>
    <property type="RefSeq protein sequence ID" value="NP_001041646.1"/>
</dbReference>
<dbReference type="AGR" id="HGNC:26952"/>
<dbReference type="AGR" id="HGNC:4206"/>
<dbReference type="AGR" id="HGNC:51831"/>
<dbReference type="CTD" id="101060233"/>
<dbReference type="CTD" id="2652"/>
<dbReference type="CTD" id="728458"/>
<dbReference type="DisGeNET" id="101060233"/>
<dbReference type="DisGeNET" id="2652"/>
<dbReference type="DisGeNET" id="728458"/>
<dbReference type="GeneCards" id="OPN1MW2"/>
<dbReference type="HGNC" id="HGNC:26952">
    <property type="gene designation" value="OPN1MW2"/>
</dbReference>
<dbReference type="HPA" id="ENSG00000166160">
    <property type="expression patterns" value="Not detected"/>
</dbReference>
<dbReference type="neXtProt" id="NX_P0DN77"/>
<dbReference type="OpenTargets" id="ENSG00000268221"/>
<dbReference type="VEuPathDB" id="HostDB:ENSG00000166160"/>
<dbReference type="eggNOG" id="KOG3656">
    <property type="taxonomic scope" value="Eukaryota"/>
</dbReference>
<dbReference type="InParanoid" id="P0DN77"/>
<dbReference type="OMA" id="DYLLLMI"/>
<dbReference type="OrthoDB" id="8545112at2759"/>
<dbReference type="PAN-GO" id="P0DN77">
    <property type="GO annotations" value="6 GO annotations based on evolutionary models"/>
</dbReference>
<dbReference type="PhylomeDB" id="P0DN77"/>
<dbReference type="PathwayCommons" id="P0DN77"/>
<dbReference type="SignaLink" id="P0DN77"/>
<dbReference type="BioGRID-ORCS" id="101060233">
    <property type="hits" value="1 hit in 6 CRISPR screens"/>
</dbReference>
<dbReference type="BioGRID-ORCS" id="2652">
    <property type="hits" value="7 hits in 250 CRISPR screens"/>
</dbReference>
<dbReference type="BioGRID-ORCS" id="728458">
    <property type="hits" value="4 hits in 254 CRISPR screens"/>
</dbReference>
<dbReference type="Pharos" id="P0DN77">
    <property type="development level" value="Tdark"/>
</dbReference>
<dbReference type="PRO" id="PR:P0DN77"/>
<dbReference type="Proteomes" id="UP000005640">
    <property type="component" value="Chromosome X"/>
</dbReference>
<dbReference type="RNAct" id="P0DN77">
    <property type="molecule type" value="protein"/>
</dbReference>
<dbReference type="Bgee" id="ENSG00000166160">
    <property type="expression patterns" value="Expressed in primordial germ cell in gonad and 2 other cell types or tissues"/>
</dbReference>
<dbReference type="GO" id="GO:0097381">
    <property type="term" value="C:photoreceptor disc membrane"/>
    <property type="evidence" value="ECO:0007669"/>
    <property type="project" value="UniProtKB-ARBA"/>
</dbReference>
<dbReference type="GO" id="GO:0001750">
    <property type="term" value="C:photoreceptor outer segment"/>
    <property type="evidence" value="ECO:0000318"/>
    <property type="project" value="GO_Central"/>
</dbReference>
<dbReference type="GO" id="GO:0005886">
    <property type="term" value="C:plasma membrane"/>
    <property type="evidence" value="ECO:0000318"/>
    <property type="project" value="GO_Central"/>
</dbReference>
<dbReference type="GO" id="GO:0008020">
    <property type="term" value="F:G protein-coupled photoreceptor activity"/>
    <property type="evidence" value="ECO:0000318"/>
    <property type="project" value="GO_Central"/>
</dbReference>
<dbReference type="GO" id="GO:0071482">
    <property type="term" value="P:cellular response to light stimulus"/>
    <property type="evidence" value="ECO:0000318"/>
    <property type="project" value="GO_Central"/>
</dbReference>
<dbReference type="GO" id="GO:0007186">
    <property type="term" value="P:G protein-coupled receptor signaling pathway"/>
    <property type="evidence" value="ECO:0000318"/>
    <property type="project" value="GO_Central"/>
</dbReference>
<dbReference type="GO" id="GO:0007602">
    <property type="term" value="P:phototransduction"/>
    <property type="evidence" value="ECO:0000318"/>
    <property type="project" value="GO_Central"/>
</dbReference>
<dbReference type="GO" id="GO:0007601">
    <property type="term" value="P:visual perception"/>
    <property type="evidence" value="ECO:0007669"/>
    <property type="project" value="UniProtKB-KW"/>
</dbReference>
<dbReference type="FunFam" id="1.20.1070.10:FF:000090">
    <property type="entry name" value="Long-wave-sensitive opsin 1"/>
    <property type="match status" value="1"/>
</dbReference>
<dbReference type="Gene3D" id="1.20.1070.10">
    <property type="entry name" value="Rhodopsin 7-helix transmembrane proteins"/>
    <property type="match status" value="1"/>
</dbReference>
<dbReference type="InterPro" id="IPR050125">
    <property type="entry name" value="GPCR_opsins"/>
</dbReference>
<dbReference type="InterPro" id="IPR000276">
    <property type="entry name" value="GPCR_Rhodpsn"/>
</dbReference>
<dbReference type="InterPro" id="IPR017452">
    <property type="entry name" value="GPCR_Rhodpsn_7TM"/>
</dbReference>
<dbReference type="InterPro" id="IPR001760">
    <property type="entry name" value="Opsin"/>
</dbReference>
<dbReference type="InterPro" id="IPR000378">
    <property type="entry name" value="Opsin_red/grn"/>
</dbReference>
<dbReference type="InterPro" id="IPR027430">
    <property type="entry name" value="Retinal_BS"/>
</dbReference>
<dbReference type="PANTHER" id="PTHR24240">
    <property type="entry name" value="OPSIN"/>
    <property type="match status" value="1"/>
</dbReference>
<dbReference type="Pfam" id="PF00001">
    <property type="entry name" value="7tm_1"/>
    <property type="match status" value="1"/>
</dbReference>
<dbReference type="PRINTS" id="PR00237">
    <property type="entry name" value="GPCRRHODOPSN"/>
</dbReference>
<dbReference type="PRINTS" id="PR00238">
    <property type="entry name" value="OPSIN"/>
</dbReference>
<dbReference type="PRINTS" id="PR00575">
    <property type="entry name" value="OPSINREDGRN"/>
</dbReference>
<dbReference type="SMART" id="SM01381">
    <property type="entry name" value="7TM_GPCR_Srsx"/>
    <property type="match status" value="1"/>
</dbReference>
<dbReference type="SUPFAM" id="SSF81321">
    <property type="entry name" value="Family A G protein-coupled receptor-like"/>
    <property type="match status" value="1"/>
</dbReference>
<dbReference type="PROSITE" id="PS00237">
    <property type="entry name" value="G_PROTEIN_RECEP_F1_1"/>
    <property type="match status" value="1"/>
</dbReference>
<dbReference type="PROSITE" id="PS50262">
    <property type="entry name" value="G_PROTEIN_RECEP_F1_2"/>
    <property type="match status" value="1"/>
</dbReference>
<dbReference type="PROSITE" id="PS00238">
    <property type="entry name" value="OPSIN"/>
    <property type="match status" value="1"/>
</dbReference>
<organism>
    <name type="scientific">Homo sapiens</name>
    <name type="common">Human</name>
    <dbReference type="NCBI Taxonomy" id="9606"/>
    <lineage>
        <taxon>Eukaryota</taxon>
        <taxon>Metazoa</taxon>
        <taxon>Chordata</taxon>
        <taxon>Craniata</taxon>
        <taxon>Vertebrata</taxon>
        <taxon>Euteleostomi</taxon>
        <taxon>Mammalia</taxon>
        <taxon>Eutheria</taxon>
        <taxon>Euarchontoglires</taxon>
        <taxon>Primates</taxon>
        <taxon>Haplorrhini</taxon>
        <taxon>Catarrhini</taxon>
        <taxon>Hominidae</taxon>
        <taxon>Homo</taxon>
    </lineage>
</organism>
<feature type="chain" id="PRO_0000435400" description="Medium-wave-sensitive opsin 2">
    <location>
        <begin position="1"/>
        <end position="364"/>
    </location>
</feature>
<feature type="topological domain" description="Extracellular" evidence="6">
    <location>
        <begin position="1"/>
        <end position="52"/>
    </location>
</feature>
<feature type="transmembrane region" description="Helical; Name=1" evidence="2">
    <location>
        <begin position="53"/>
        <end position="77"/>
    </location>
</feature>
<feature type="topological domain" description="Cytoplasmic" evidence="6">
    <location>
        <begin position="78"/>
        <end position="89"/>
    </location>
</feature>
<feature type="transmembrane region" description="Helical; Name=2" evidence="2">
    <location>
        <begin position="90"/>
        <end position="115"/>
    </location>
</feature>
<feature type="topological domain" description="Extracellular" evidence="6">
    <location>
        <begin position="116"/>
        <end position="129"/>
    </location>
</feature>
<feature type="transmembrane region" description="Helical; Name=3" evidence="2">
    <location>
        <begin position="130"/>
        <end position="149"/>
    </location>
</feature>
<feature type="topological domain" description="Cytoplasmic" evidence="6">
    <location>
        <begin position="150"/>
        <end position="168"/>
    </location>
</feature>
<feature type="transmembrane region" description="Helical; Name=4" evidence="2">
    <location>
        <begin position="169"/>
        <end position="192"/>
    </location>
</feature>
<feature type="topological domain" description="Extracellular" evidence="6">
    <location>
        <begin position="193"/>
        <end position="218"/>
    </location>
</feature>
<feature type="transmembrane region" description="Helical; Name=5" evidence="2">
    <location>
        <begin position="219"/>
        <end position="246"/>
    </location>
</feature>
<feature type="topological domain" description="Cytoplasmic" evidence="6">
    <location>
        <begin position="247"/>
        <end position="268"/>
    </location>
</feature>
<feature type="transmembrane region" description="Helical; Name=6" evidence="2">
    <location>
        <begin position="269"/>
        <end position="292"/>
    </location>
</feature>
<feature type="topological domain" description="Extracellular" evidence="6">
    <location>
        <begin position="293"/>
        <end position="300"/>
    </location>
</feature>
<feature type="transmembrane region" description="Helical; Name=7" evidence="2">
    <location>
        <begin position="301"/>
        <end position="325"/>
    </location>
</feature>
<feature type="topological domain" description="Cytoplasmic" evidence="6">
    <location>
        <begin position="326"/>
        <end position="364"/>
    </location>
</feature>
<feature type="region of interest" description="Disordered" evidence="5">
    <location>
        <begin position="1"/>
        <end position="23"/>
    </location>
</feature>
<feature type="region of interest" description="Required for 11-cis-retinal regeneration" evidence="1">
    <location>
        <begin position="17"/>
        <end position="43"/>
    </location>
</feature>
<feature type="modified residue" description="N6-(retinylidene)lysine" evidence="1">
    <location>
        <position position="312"/>
    </location>
</feature>
<feature type="glycosylation site" description="N-linked (GlcNAc...) asparagine" evidence="3">
    <location>
        <position position="34"/>
    </location>
</feature>
<feature type="disulfide bond" evidence="4">
    <location>
        <begin position="126"/>
        <end position="203"/>
    </location>
</feature>